<name>IHFB_BRASB</name>
<dbReference type="EMBL" id="CP000494">
    <property type="protein sequence ID" value="ABQ32401.1"/>
    <property type="molecule type" value="Genomic_DNA"/>
</dbReference>
<dbReference type="RefSeq" id="WP_011942624.1">
    <property type="nucleotide sequence ID" value="NC_009485.1"/>
</dbReference>
<dbReference type="SMR" id="A5E8A7"/>
<dbReference type="STRING" id="288000.BBta_0101"/>
<dbReference type="KEGG" id="bbt:BBta_0101"/>
<dbReference type="eggNOG" id="COG0776">
    <property type="taxonomic scope" value="Bacteria"/>
</dbReference>
<dbReference type="HOGENOM" id="CLU_105066_2_1_5"/>
<dbReference type="OrthoDB" id="9804203at2"/>
<dbReference type="Proteomes" id="UP000000246">
    <property type="component" value="Chromosome"/>
</dbReference>
<dbReference type="GO" id="GO:0005694">
    <property type="term" value="C:chromosome"/>
    <property type="evidence" value="ECO:0007669"/>
    <property type="project" value="InterPro"/>
</dbReference>
<dbReference type="GO" id="GO:0005829">
    <property type="term" value="C:cytosol"/>
    <property type="evidence" value="ECO:0007669"/>
    <property type="project" value="TreeGrafter"/>
</dbReference>
<dbReference type="GO" id="GO:0003677">
    <property type="term" value="F:DNA binding"/>
    <property type="evidence" value="ECO:0007669"/>
    <property type="project" value="UniProtKB-UniRule"/>
</dbReference>
<dbReference type="GO" id="GO:0030527">
    <property type="term" value="F:structural constituent of chromatin"/>
    <property type="evidence" value="ECO:0007669"/>
    <property type="project" value="InterPro"/>
</dbReference>
<dbReference type="GO" id="GO:0006310">
    <property type="term" value="P:DNA recombination"/>
    <property type="evidence" value="ECO:0007669"/>
    <property type="project" value="UniProtKB-UniRule"/>
</dbReference>
<dbReference type="GO" id="GO:0006355">
    <property type="term" value="P:regulation of DNA-templated transcription"/>
    <property type="evidence" value="ECO:0007669"/>
    <property type="project" value="UniProtKB-UniRule"/>
</dbReference>
<dbReference type="GO" id="GO:0006417">
    <property type="term" value="P:regulation of translation"/>
    <property type="evidence" value="ECO:0007669"/>
    <property type="project" value="UniProtKB-UniRule"/>
</dbReference>
<dbReference type="CDD" id="cd13836">
    <property type="entry name" value="IHF_B"/>
    <property type="match status" value="1"/>
</dbReference>
<dbReference type="FunFam" id="4.10.520.10:FF:000008">
    <property type="entry name" value="Integration host factor subunit beta"/>
    <property type="match status" value="1"/>
</dbReference>
<dbReference type="Gene3D" id="4.10.520.10">
    <property type="entry name" value="IHF-like DNA-binding proteins"/>
    <property type="match status" value="1"/>
</dbReference>
<dbReference type="HAMAP" id="MF_00381">
    <property type="entry name" value="IHF_beta"/>
    <property type="match status" value="1"/>
</dbReference>
<dbReference type="InterPro" id="IPR000119">
    <property type="entry name" value="Hist_DNA-bd"/>
</dbReference>
<dbReference type="InterPro" id="IPR020816">
    <property type="entry name" value="Histone-like_DNA-bd_CS"/>
</dbReference>
<dbReference type="InterPro" id="IPR010992">
    <property type="entry name" value="IHF-like_DNA-bd_dom_sf"/>
</dbReference>
<dbReference type="InterPro" id="IPR005685">
    <property type="entry name" value="IHF_beta"/>
</dbReference>
<dbReference type="NCBIfam" id="TIGR00988">
    <property type="entry name" value="hip"/>
    <property type="match status" value="1"/>
</dbReference>
<dbReference type="NCBIfam" id="NF001222">
    <property type="entry name" value="PRK00199.1"/>
    <property type="match status" value="1"/>
</dbReference>
<dbReference type="PANTHER" id="PTHR33175">
    <property type="entry name" value="DNA-BINDING PROTEIN HU"/>
    <property type="match status" value="1"/>
</dbReference>
<dbReference type="PANTHER" id="PTHR33175:SF5">
    <property type="entry name" value="INTEGRATION HOST FACTOR SUBUNIT BETA"/>
    <property type="match status" value="1"/>
</dbReference>
<dbReference type="Pfam" id="PF00216">
    <property type="entry name" value="Bac_DNA_binding"/>
    <property type="match status" value="1"/>
</dbReference>
<dbReference type="PRINTS" id="PR01727">
    <property type="entry name" value="DNABINDINGHU"/>
</dbReference>
<dbReference type="SMART" id="SM00411">
    <property type="entry name" value="BHL"/>
    <property type="match status" value="1"/>
</dbReference>
<dbReference type="SUPFAM" id="SSF47729">
    <property type="entry name" value="IHF-like DNA-binding proteins"/>
    <property type="match status" value="1"/>
</dbReference>
<dbReference type="PROSITE" id="PS00045">
    <property type="entry name" value="HISTONE_LIKE"/>
    <property type="match status" value="1"/>
</dbReference>
<gene>
    <name evidence="1" type="primary">ihfB</name>
    <name evidence="1" type="synonym">himD</name>
    <name type="ordered locus">BBta_0101</name>
</gene>
<feature type="chain" id="PRO_1000060587" description="Integration host factor subunit beta">
    <location>
        <begin position="1"/>
        <end position="103"/>
    </location>
</feature>
<protein>
    <recommendedName>
        <fullName evidence="1">Integration host factor subunit beta</fullName>
        <shortName evidence="1">IHF-beta</shortName>
    </recommendedName>
</protein>
<proteinExistence type="inferred from homology"/>
<accession>A5E8A7</accession>
<sequence>MIKSELVQRIAEHNPHLYQRDVENIVNAILDEIVAALARGDRVELRGFGAFSVKHRPARAGRNPRTGAHVPVDQKSVPFFKTGKEMRERLNRDNPAGAADTDD</sequence>
<reference key="1">
    <citation type="journal article" date="2007" name="Science">
        <title>Legumes symbioses: absence of nod genes in photosynthetic bradyrhizobia.</title>
        <authorList>
            <person name="Giraud E."/>
            <person name="Moulin L."/>
            <person name="Vallenet D."/>
            <person name="Barbe V."/>
            <person name="Cytryn E."/>
            <person name="Avarre J.-C."/>
            <person name="Jaubert M."/>
            <person name="Simon D."/>
            <person name="Cartieaux F."/>
            <person name="Prin Y."/>
            <person name="Bena G."/>
            <person name="Hannibal L."/>
            <person name="Fardoux J."/>
            <person name="Kojadinovic M."/>
            <person name="Vuillet L."/>
            <person name="Lajus A."/>
            <person name="Cruveiller S."/>
            <person name="Rouy Z."/>
            <person name="Mangenot S."/>
            <person name="Segurens B."/>
            <person name="Dossat C."/>
            <person name="Franck W.L."/>
            <person name="Chang W.-S."/>
            <person name="Saunders E."/>
            <person name="Bruce D."/>
            <person name="Richardson P."/>
            <person name="Normand P."/>
            <person name="Dreyfus B."/>
            <person name="Pignol D."/>
            <person name="Stacey G."/>
            <person name="Emerich D."/>
            <person name="Vermeglio A."/>
            <person name="Medigue C."/>
            <person name="Sadowsky M."/>
        </authorList>
    </citation>
    <scope>NUCLEOTIDE SEQUENCE [LARGE SCALE GENOMIC DNA]</scope>
    <source>
        <strain>BTAi1 / ATCC BAA-1182</strain>
    </source>
</reference>
<keyword id="KW-0233">DNA recombination</keyword>
<keyword id="KW-0238">DNA-binding</keyword>
<keyword id="KW-1185">Reference proteome</keyword>
<keyword id="KW-0804">Transcription</keyword>
<keyword id="KW-0805">Transcription regulation</keyword>
<keyword id="KW-0810">Translation regulation</keyword>
<comment type="function">
    <text evidence="1">This protein is one of the two subunits of integration host factor, a specific DNA-binding protein that functions in genetic recombination as well as in transcriptional and translational control.</text>
</comment>
<comment type="subunit">
    <text evidence="1">Heterodimer of an alpha and a beta chain.</text>
</comment>
<comment type="similarity">
    <text evidence="1">Belongs to the bacterial histone-like protein family.</text>
</comment>
<organism>
    <name type="scientific">Bradyrhizobium sp. (strain BTAi1 / ATCC BAA-1182)</name>
    <dbReference type="NCBI Taxonomy" id="288000"/>
    <lineage>
        <taxon>Bacteria</taxon>
        <taxon>Pseudomonadati</taxon>
        <taxon>Pseudomonadota</taxon>
        <taxon>Alphaproteobacteria</taxon>
        <taxon>Hyphomicrobiales</taxon>
        <taxon>Nitrobacteraceae</taxon>
        <taxon>Bradyrhizobium</taxon>
    </lineage>
</organism>
<evidence type="ECO:0000255" key="1">
    <source>
        <dbReference type="HAMAP-Rule" id="MF_00381"/>
    </source>
</evidence>